<organismHost>
    <name type="scientific">Ornithodoros</name>
    <name type="common">relapsing fever ticks</name>
    <dbReference type="NCBI Taxonomy" id="6937"/>
</organismHost>
<organismHost>
    <name type="scientific">Phacochoerus aethiopicus</name>
    <name type="common">Warthog</name>
    <dbReference type="NCBI Taxonomy" id="85517"/>
</organismHost>
<organismHost>
    <name type="scientific">Phacochoerus africanus</name>
    <name type="common">Warthog</name>
    <dbReference type="NCBI Taxonomy" id="41426"/>
</organismHost>
<organismHost>
    <name type="scientific">Potamochoerus larvatus</name>
    <name type="common">Bushpig</name>
    <dbReference type="NCBI Taxonomy" id="273792"/>
</organismHost>
<organismHost>
    <name type="scientific">Sus scrofa</name>
    <name type="common">Pig</name>
    <dbReference type="NCBI Taxonomy" id="9823"/>
</organismHost>
<dbReference type="EMBL" id="AY261366">
    <property type="status" value="NOT_ANNOTATED_CDS"/>
    <property type="molecule type" value="Genomic_DNA"/>
</dbReference>
<dbReference type="SMR" id="P0CAG2"/>
<dbReference type="Proteomes" id="UP000000858">
    <property type="component" value="Segment"/>
</dbReference>
<dbReference type="GO" id="GO:0008270">
    <property type="term" value="F:zinc ion binding"/>
    <property type="evidence" value="ECO:0007669"/>
    <property type="project" value="UniProtKB-KW"/>
</dbReference>
<dbReference type="GO" id="GO:0046782">
    <property type="term" value="P:regulation of viral transcription"/>
    <property type="evidence" value="ECO:0007669"/>
    <property type="project" value="InterPro"/>
</dbReference>
<dbReference type="InterPro" id="IPR007031">
    <property type="entry name" value="Poxvirus_VLTF3"/>
</dbReference>
<dbReference type="InterPro" id="IPR014900">
    <property type="entry name" value="VLTF-3_Zn_ribbon"/>
</dbReference>
<dbReference type="Pfam" id="PF08792">
    <property type="entry name" value="A2L_zn_ribbon"/>
    <property type="match status" value="1"/>
</dbReference>
<dbReference type="Pfam" id="PF04947">
    <property type="entry name" value="Pox_VLTF3"/>
    <property type="match status" value="1"/>
</dbReference>
<dbReference type="PROSITE" id="PS00028">
    <property type="entry name" value="ZINC_FINGER_C2H2_1"/>
    <property type="match status" value="1"/>
</dbReference>
<name>VF385_ASFWA</name>
<evidence type="ECO:0000305" key="1"/>
<gene>
    <name type="ordered locus">War-090</name>
</gene>
<reference key="1">
    <citation type="submission" date="2003-03" db="EMBL/GenBank/DDBJ databases">
        <title>African swine fever virus genomes.</title>
        <authorList>
            <person name="Kutish G.F."/>
            <person name="Rock D.L."/>
        </authorList>
    </citation>
    <scope>NUCLEOTIDE SEQUENCE [LARGE SCALE GENOMIC DNA]</scope>
</reference>
<comment type="induction">
    <text evidence="1">Expressed in the late phase of the viral replicative cycle.</text>
</comment>
<comment type="similarity">
    <text evidence="1">Belongs to the asfivirus B385R family.</text>
</comment>
<accession>P0CAG2</accession>
<sequence>MDEIINKYQAVEKLFKEIQQGLAAYDQYKTLISEMMHYNNHIKQEYFNFLMIISPYLIRAHSGETLRNKVNNEIKRLILVENINTKISKTLVSVNFLLQKKLSTDGVKTKNMWCTNNPMLQVKTAHNLFKQLCDTQSKTQWVQTLKYKECKYCHTDMVFNTTQFGLQCPNCGCIQELMGTIFDETHFYNHDGQKAKSGIFNPNRHYRFWIEHILGRNSEQELGTKQDPCGTKVLQQLKKIIKRDNKCIALLTVENIRKMLKEINRTDLNNCVSLILRKLTGVGPPQISESILLRGEYIFTEAIKIREKVCKKGRINRNYYPYYIYKIFDAILPPNDTTNRRILQYIHLQGNDTLANNDSEWESICMELPEIKWKPTDRTHCVHFF</sequence>
<feature type="chain" id="PRO_0000373675" description="Zinc finger protein B385R">
    <location>
        <begin position="1"/>
        <end position="385"/>
    </location>
</feature>
<feature type="zinc finger region" description="C2H2-type">
    <location>
        <begin position="166"/>
        <end position="190"/>
    </location>
</feature>
<proteinExistence type="inferred from homology"/>
<organism>
    <name type="scientific">African swine fever virus (isolate Warthog/Namibia/Wart80/1980)</name>
    <name type="common">ASFV</name>
    <dbReference type="NCBI Taxonomy" id="561444"/>
    <lineage>
        <taxon>Viruses</taxon>
        <taxon>Varidnaviria</taxon>
        <taxon>Bamfordvirae</taxon>
        <taxon>Nucleocytoviricota</taxon>
        <taxon>Pokkesviricetes</taxon>
        <taxon>Asfuvirales</taxon>
        <taxon>Asfarviridae</taxon>
        <taxon>Asfivirus</taxon>
        <taxon>African swine fever virus</taxon>
    </lineage>
</organism>
<protein>
    <recommendedName>
        <fullName>Zinc finger protein B385R</fullName>
        <shortName>pB385R</shortName>
    </recommendedName>
</protein>
<keyword id="KW-0426">Late protein</keyword>
<keyword id="KW-0479">Metal-binding</keyword>
<keyword id="KW-0862">Zinc</keyword>
<keyword id="KW-0863">Zinc-finger</keyword>